<dbReference type="EMBL" id="JQ348891">
    <property type="protein sequence ID" value="AEZ06361.1"/>
    <property type="molecule type" value="mRNA"/>
</dbReference>
<dbReference type="EMBL" id="JQ348892">
    <property type="protein sequence ID" value="AEZ06362.1"/>
    <property type="molecule type" value="mRNA"/>
</dbReference>
<dbReference type="EMBL" id="AB028926">
    <property type="protein sequence ID" value="BAB82465.1"/>
    <property type="molecule type" value="mRNA"/>
</dbReference>
<dbReference type="EMBL" id="AF490252">
    <property type="protein sequence ID" value="AAO85460.1"/>
    <property type="molecule type" value="mRNA"/>
</dbReference>
<dbReference type="EMBL" id="AF100748">
    <property type="protein sequence ID" value="AAD43012.1"/>
    <property type="molecule type" value="mRNA"/>
</dbReference>
<dbReference type="EMBL" id="AY359104">
    <property type="protein sequence ID" value="AAQ89462.1"/>
    <property type="molecule type" value="mRNA"/>
</dbReference>
<dbReference type="EMBL" id="AK075340">
    <property type="protein sequence ID" value="BAG52116.1"/>
    <property type="molecule type" value="mRNA"/>
</dbReference>
<dbReference type="EMBL" id="AK315956">
    <property type="protein sequence ID" value="BAH14327.1"/>
    <property type="molecule type" value="mRNA"/>
</dbReference>
<dbReference type="EMBL" id="AK222632">
    <property type="protein sequence ID" value="BAD96352.1"/>
    <property type="molecule type" value="mRNA"/>
</dbReference>
<dbReference type="EMBL" id="AC044849">
    <property type="status" value="NOT_ANNOTATED_CDS"/>
    <property type="molecule type" value="Genomic_DNA"/>
</dbReference>
<dbReference type="EMBL" id="CH471080">
    <property type="protein sequence ID" value="EAW63471.1"/>
    <property type="molecule type" value="Genomic_DNA"/>
</dbReference>
<dbReference type="EMBL" id="CH471080">
    <property type="protein sequence ID" value="EAW63472.1"/>
    <property type="molecule type" value="Genomic_DNA"/>
</dbReference>
<dbReference type="EMBL" id="CH471080">
    <property type="protein sequence ID" value="EAW63474.1"/>
    <property type="molecule type" value="Genomic_DNA"/>
</dbReference>
<dbReference type="EMBL" id="BC015012">
    <property type="protein sequence ID" value="AAH15012.1"/>
    <property type="molecule type" value="mRNA"/>
</dbReference>
<dbReference type="EMBL" id="AF078855">
    <property type="protein sequence ID" value="AAD44487.1"/>
    <property type="status" value="ALT_FRAME"/>
    <property type="molecule type" value="mRNA"/>
</dbReference>
<dbReference type="CCDS" id="CCDS6074.1">
    <molecule id="Q96BY9-1"/>
</dbReference>
<dbReference type="CCDS" id="CCDS64866.1">
    <molecule id="Q96BY9-2"/>
</dbReference>
<dbReference type="RefSeq" id="NP_001271168.1">
    <molecule id="Q96BY9-2"/>
    <property type="nucleotide sequence ID" value="NM_001284239.1"/>
</dbReference>
<dbReference type="RefSeq" id="NP_057211.4">
    <molecule id="Q96BY9-1"/>
    <property type="nucleotide sequence ID" value="NM_016127.5"/>
</dbReference>
<dbReference type="PDB" id="6O2U">
    <property type="method" value="X-ray"/>
    <property type="resolution" value="1.80 A"/>
    <property type="chains" value="A/B=30-164"/>
</dbReference>
<dbReference type="PDB" id="6O2V">
    <property type="method" value="X-ray"/>
    <property type="resolution" value="1.58 A"/>
    <property type="chains" value="A/B=30-164"/>
</dbReference>
<dbReference type="PDB" id="6O2W">
    <property type="method" value="X-ray"/>
    <property type="resolution" value="2.10 A"/>
    <property type="chains" value="A/B=30-164"/>
</dbReference>
<dbReference type="PDBsum" id="6O2U"/>
<dbReference type="PDBsum" id="6O2V"/>
<dbReference type="PDBsum" id="6O2W"/>
<dbReference type="SMR" id="Q96BY9"/>
<dbReference type="BioGRID" id="119672">
    <property type="interactions" value="226"/>
</dbReference>
<dbReference type="FunCoup" id="Q96BY9">
    <property type="interactions" value="668"/>
</dbReference>
<dbReference type="IntAct" id="Q96BY9">
    <property type="interactions" value="201"/>
</dbReference>
<dbReference type="MINT" id="Q96BY9"/>
<dbReference type="STRING" id="9606.ENSP00000256255"/>
<dbReference type="TCDB" id="8.A.111.1.1">
    <property type="family name" value="the store-operated ca2+ entry-associated regulatory factor (saraf) family"/>
</dbReference>
<dbReference type="GlyGen" id="Q96BY9">
    <property type="glycosylation" value="1 site"/>
</dbReference>
<dbReference type="iPTMnet" id="Q96BY9"/>
<dbReference type="PhosphoSitePlus" id="Q96BY9"/>
<dbReference type="BioMuta" id="SARAF"/>
<dbReference type="DMDM" id="74731293"/>
<dbReference type="jPOST" id="Q96BY9"/>
<dbReference type="MassIVE" id="Q96BY9"/>
<dbReference type="PaxDb" id="9606-ENSP00000256255"/>
<dbReference type="PeptideAtlas" id="Q96BY9"/>
<dbReference type="ProteomicsDB" id="76130">
    <molecule id="Q96BY9-1"/>
</dbReference>
<dbReference type="ProteomicsDB" id="76131">
    <molecule id="Q96BY9-2"/>
</dbReference>
<dbReference type="Pumba" id="Q96BY9"/>
<dbReference type="Antibodypedia" id="23198">
    <property type="antibodies" value="109 antibodies from 17 providers"/>
</dbReference>
<dbReference type="DNASU" id="51669"/>
<dbReference type="Ensembl" id="ENST00000256255.11">
    <molecule id="Q96BY9-1"/>
    <property type="protein sequence ID" value="ENSP00000256255.6"/>
    <property type="gene ID" value="ENSG00000133872.14"/>
</dbReference>
<dbReference type="Ensembl" id="ENST00000545648.2">
    <molecule id="Q96BY9-2"/>
    <property type="protein sequence ID" value="ENSP00000441351.1"/>
    <property type="gene ID" value="ENSG00000133872.14"/>
</dbReference>
<dbReference type="GeneID" id="51669"/>
<dbReference type="KEGG" id="hsa:51669"/>
<dbReference type="MANE-Select" id="ENST00000256255.11">
    <property type="protein sequence ID" value="ENSP00000256255.6"/>
    <property type="RefSeq nucleotide sequence ID" value="NM_016127.6"/>
    <property type="RefSeq protein sequence ID" value="NP_057211.4"/>
</dbReference>
<dbReference type="UCSC" id="uc003xhs.5">
    <molecule id="Q96BY9-1"/>
    <property type="organism name" value="human"/>
</dbReference>
<dbReference type="AGR" id="HGNC:28789"/>
<dbReference type="CTD" id="51669"/>
<dbReference type="DisGeNET" id="51669"/>
<dbReference type="GeneCards" id="SARAF"/>
<dbReference type="HGNC" id="HGNC:28789">
    <property type="gene designation" value="SARAF"/>
</dbReference>
<dbReference type="HPA" id="ENSG00000133872">
    <property type="expression patterns" value="Low tissue specificity"/>
</dbReference>
<dbReference type="MIM" id="614768">
    <property type="type" value="gene"/>
</dbReference>
<dbReference type="neXtProt" id="NX_Q96BY9"/>
<dbReference type="OpenTargets" id="ENSG00000133872"/>
<dbReference type="PharmGKB" id="PA142670779"/>
<dbReference type="VEuPathDB" id="HostDB:ENSG00000133872"/>
<dbReference type="eggNOG" id="ENOG502QT6Y">
    <property type="taxonomic scope" value="Eukaryota"/>
</dbReference>
<dbReference type="GeneTree" id="ENSGT00390000013419"/>
<dbReference type="HOGENOM" id="CLU_046802_0_1_1"/>
<dbReference type="InParanoid" id="Q96BY9"/>
<dbReference type="OMA" id="WILKGSC"/>
<dbReference type="OrthoDB" id="20303at2759"/>
<dbReference type="PAN-GO" id="Q96BY9">
    <property type="GO annotations" value="2 GO annotations based on evolutionary models"/>
</dbReference>
<dbReference type="PhylomeDB" id="Q96BY9"/>
<dbReference type="TreeFam" id="TF314811"/>
<dbReference type="PathwayCommons" id="Q96BY9"/>
<dbReference type="SignaLink" id="Q96BY9"/>
<dbReference type="BioGRID-ORCS" id="51669">
    <property type="hits" value="14 hits in 1160 CRISPR screens"/>
</dbReference>
<dbReference type="ChiTaRS" id="SARAF">
    <property type="organism name" value="human"/>
</dbReference>
<dbReference type="GeneWiki" id="TMEM66"/>
<dbReference type="GenomeRNAi" id="51669"/>
<dbReference type="Pharos" id="Q96BY9">
    <property type="development level" value="Tbio"/>
</dbReference>
<dbReference type="PRO" id="PR:Q96BY9"/>
<dbReference type="Proteomes" id="UP000005640">
    <property type="component" value="Chromosome 8"/>
</dbReference>
<dbReference type="RNAct" id="Q96BY9">
    <property type="molecule type" value="protein"/>
</dbReference>
<dbReference type="Bgee" id="ENSG00000133872">
    <property type="expression patterns" value="Expressed in germinal epithelium of ovary and 213 other cell types or tissues"/>
</dbReference>
<dbReference type="ExpressionAtlas" id="Q96BY9">
    <property type="expression patterns" value="baseline and differential"/>
</dbReference>
<dbReference type="GO" id="GO:0005783">
    <property type="term" value="C:endoplasmic reticulum"/>
    <property type="evidence" value="ECO:0000314"/>
    <property type="project" value="HPA"/>
</dbReference>
<dbReference type="GO" id="GO:0005789">
    <property type="term" value="C:endoplasmic reticulum membrane"/>
    <property type="evidence" value="ECO:0000314"/>
    <property type="project" value="UniProtKB"/>
</dbReference>
<dbReference type="GO" id="GO:0140268">
    <property type="term" value="C:endoplasmic reticulum-plasma membrane contact site"/>
    <property type="evidence" value="ECO:0000314"/>
    <property type="project" value="UniProtKB"/>
</dbReference>
<dbReference type="GO" id="GO:0006816">
    <property type="term" value="P:calcium ion transport"/>
    <property type="evidence" value="ECO:0007669"/>
    <property type="project" value="UniProtKB-KW"/>
</dbReference>
<dbReference type="GO" id="GO:2001256">
    <property type="term" value="P:regulation of store-operated calcium entry"/>
    <property type="evidence" value="ECO:0000314"/>
    <property type="project" value="UniProtKB"/>
</dbReference>
<dbReference type="InterPro" id="IPR009567">
    <property type="entry name" value="SARAF"/>
</dbReference>
<dbReference type="PANTHER" id="PTHR15929">
    <property type="entry name" value="STORE-OPERATED CALCIUM ENTRY-ASSOCIATED REGULATORY FACTOR"/>
    <property type="match status" value="1"/>
</dbReference>
<dbReference type="PANTHER" id="PTHR15929:SF0">
    <property type="entry name" value="STORE-OPERATED CALCIUM ENTRY-ASSOCIATED REGULATORY FACTOR"/>
    <property type="match status" value="1"/>
</dbReference>
<dbReference type="Pfam" id="PF06682">
    <property type="entry name" value="SARAF"/>
    <property type="match status" value="1"/>
</dbReference>
<protein>
    <recommendedName>
        <fullName>Store-operated calcium entry-associated regulatory factor</fullName>
        <shortName>SARAF</shortName>
        <shortName>SOCE-associated regulatory factor</shortName>
    </recommendedName>
    <alternativeName>
        <fullName>HBV X-transactivated gene 3 protein</fullName>
    </alternativeName>
    <alternativeName>
        <fullName>HBV XAg-transactivated protein 3</fullName>
    </alternativeName>
    <alternativeName>
        <fullName>Protein FOAP-7</fullName>
    </alternativeName>
    <alternativeName>
        <fullName>Transmembrane protein 66</fullName>
    </alternativeName>
</protein>
<comment type="function">
    <text evidence="4">Negative regulator of store-operated Ca(2+) entry (SOCE) involved in protecting cells from Ca(2+) overfilling. In response to cytosolic Ca(2+) elevation after endoplasmic reticulum Ca(2+) refilling, promotes a slow inactivation of STIM (STIM1 or STIM2)-dependent SOCE activity: possibly act by facilitating the deoligomerization of STIM to efficiently turn off ORAI when the endoplasmic reticulum lumen is filled with the appropriate Ca(2+) levels, and thus preventing the overload of the cell with excessive Ca(2+) ions.</text>
</comment>
<comment type="subunit">
    <text evidence="4 5">Interacts with STIM1; the interaction is inhibited by the interaction of STIM1 with EFHB.</text>
</comment>
<comment type="interaction">
    <interactant intactId="EBI-722561">
        <id>Q96BY9</id>
    </interactant>
    <interactant intactId="EBI-1564678">
        <id>Q96J02</id>
        <label>ITCH</label>
    </interactant>
    <organismsDiffer>false</organismsDiffer>
    <experiments>2</experiments>
</comment>
<comment type="interaction">
    <interactant intactId="EBI-722561">
        <id>Q96BY9</id>
    </interactant>
    <interactant intactId="EBI-448878">
        <id>Q13586</id>
        <label>STIM1</label>
    </interactant>
    <organismsDiffer>false</organismsDiffer>
    <experiments>4</experiments>
</comment>
<comment type="subcellular location">
    <subcellularLocation>
        <location evidence="4">Endoplasmic reticulum membrane</location>
        <topology evidence="4">Single-pass type I membrane protein</topology>
    </subcellularLocation>
    <text>Translocates to the endoplasmic reticulum-plasma membrane (ER-PM) region in a STIM1-dependent manner following cytosolic Ca(2+) elevation.</text>
</comment>
<comment type="subcellular location">
    <molecule>Isoform 2</molecule>
    <subcellularLocation>
        <location>Endoplasmic reticulum membrane</location>
        <topology>Single-pass type I membrane protein</topology>
    </subcellularLocation>
</comment>
<comment type="alternative products">
    <event type="alternative splicing"/>
    <isoform>
        <id>Q96BY9-1</id>
        <name>1</name>
        <sequence type="displayed"/>
    </isoform>
    <isoform>
        <id>Q96BY9-2</id>
        <name>2</name>
        <name>Short</name>
        <sequence type="described" ref="VSP_043773"/>
    </isoform>
</comment>
<comment type="tissue specificity">
    <text evidence="6">Highly expressed in macrophages.</text>
</comment>
<comment type="domain">
    <text evidence="4">The cytoplasmic C-terminal region mediates interaction with STIM1, while the N-terminal lumenal region mediates regulation of SOCE activity.</text>
</comment>
<comment type="similarity">
    <text evidence="9">Belongs to the SARAF family.</text>
</comment>
<comment type="sequence caution" evidence="9">
    <conflict type="frameshift">
        <sequence resource="EMBL-CDS" id="AAD44487"/>
    </conflict>
</comment>
<evidence type="ECO:0000255" key="1"/>
<evidence type="ECO:0000256" key="2">
    <source>
        <dbReference type="SAM" id="MobiDB-lite"/>
    </source>
</evidence>
<evidence type="ECO:0000269" key="3">
    <source>
    </source>
</evidence>
<evidence type="ECO:0000269" key="4">
    <source>
    </source>
</evidence>
<evidence type="ECO:0000269" key="5">
    <source>
    </source>
</evidence>
<evidence type="ECO:0000269" key="6">
    <source ref="2"/>
</evidence>
<evidence type="ECO:0000303" key="7">
    <source>
    </source>
</evidence>
<evidence type="ECO:0000303" key="8">
    <source>
    </source>
</evidence>
<evidence type="ECO:0000305" key="9"/>
<evidence type="ECO:0007829" key="10">
    <source>
        <dbReference type="PDB" id="6O2U"/>
    </source>
</evidence>
<evidence type="ECO:0007829" key="11">
    <source>
        <dbReference type="PDB" id="6O2V"/>
    </source>
</evidence>
<accession>Q96BY9</accession>
<accession>B3KQQ4</accession>
<accession>B7Z9J1</accession>
<accession>D3DSU7</accession>
<accession>H9MHJ8</accession>
<accession>H9MHJ9</accession>
<accession>Q53HE8</accession>
<accession>Q9UNZ3</accession>
<accession>Q9Y683</accession>
<gene>
    <name type="primary">SARAF</name>
    <name type="synonym">TMEM66</name>
    <name type="synonym">XTP3</name>
    <name type="ORF">HSPC035</name>
    <name type="ORF">NPD003</name>
    <name type="ORF">PSEC0019</name>
    <name type="ORF">UNQ1967/PRO4499</name>
</gene>
<reference key="1">
    <citation type="journal article" date="2012" name="Cell">
        <title>SARAF inactivates the store operated calcium entry machinery to prevent excess calcium refilling.</title>
        <authorList>
            <person name="Palty R."/>
            <person name="Raveh A."/>
            <person name="Kaminsky I."/>
            <person name="Meller R."/>
            <person name="Reuveny E."/>
        </authorList>
    </citation>
    <scope>NUCLEOTIDE SEQUENCE [MRNA] (ISOFORMS 1 AND 2)</scope>
    <scope>FUNCTION</scope>
    <scope>SUBCELLULAR LOCATION</scope>
    <scope>TOPOLOGY</scope>
    <scope>INTERACTION WITH STIM1</scope>
    <scope>MUTAGENESIS OF GLU-148</scope>
    <source>
        <tissue>Heart</tissue>
    </source>
</reference>
<reference key="2">
    <citation type="submission" date="1999-06" db="EMBL/GenBank/DDBJ databases">
        <title>Molecular cloning of a human novel gene, FOAP-7, which are highly expressed in macrophages.</title>
        <authorList>
            <person name="Fujii Y."/>
            <person name="Tsuritani K."/>
            <person name="Yajima Y."/>
            <person name="Amemiya T."/>
            <person name="Ukai Y."/>
            <person name="Naito K."/>
            <person name="Kawaguchi A."/>
            <person name="Takayama K."/>
        </authorList>
    </citation>
    <scope>NUCLEOTIDE SEQUENCE [MRNA] (ISOFORM 1)</scope>
    <scope>TISSUE SPECIFICITY</scope>
</reference>
<reference key="3">
    <citation type="submission" date="2002-03" db="EMBL/GenBank/DDBJ databases">
        <title>Cloning and identification of human gene 3 transactivated by hepatitis B virus X antigen.</title>
        <authorList>
            <person name="Liu Y."/>
            <person name="Cheng J."/>
            <person name="Lu Y."/>
            <person name="Wang G."/>
            <person name="Zhang L."/>
            <person name="Chen J."/>
            <person name="Li L."/>
        </authorList>
    </citation>
    <scope>NUCLEOTIDE SEQUENCE [MRNA] (ISOFORM 1)</scope>
</reference>
<reference key="4">
    <citation type="journal article" date="2000" name="Genome Res.">
        <title>Cloning and functional analysis of cDNAs with open reading frames for 300 previously undefined genes expressed in CD34+ hematopoietic stem/progenitor cells.</title>
        <authorList>
            <person name="Zhang Q.-H."/>
            <person name="Ye M."/>
            <person name="Wu X.-Y."/>
            <person name="Ren S.-X."/>
            <person name="Zhao M."/>
            <person name="Zhao C.-J."/>
            <person name="Fu G."/>
            <person name="Shen Y."/>
            <person name="Fan H.-Y."/>
            <person name="Lu G."/>
            <person name="Zhong M."/>
            <person name="Xu X.-R."/>
            <person name="Han Z.-G."/>
            <person name="Zhang J.-W."/>
            <person name="Tao J."/>
            <person name="Huang Q.-H."/>
            <person name="Zhou J."/>
            <person name="Hu G.-X."/>
            <person name="Gu J."/>
            <person name="Chen S.-J."/>
            <person name="Chen Z."/>
        </authorList>
    </citation>
    <scope>NUCLEOTIDE SEQUENCE [LARGE SCALE MRNA] (ISOFORM 1)</scope>
    <source>
        <tissue>Umbilical cord blood</tissue>
    </source>
</reference>
<reference key="5">
    <citation type="journal article" date="2003" name="Genome Res.">
        <title>The secreted protein discovery initiative (SPDI), a large-scale effort to identify novel human secreted and transmembrane proteins: a bioinformatics assessment.</title>
        <authorList>
            <person name="Clark H.F."/>
            <person name="Gurney A.L."/>
            <person name="Abaya E."/>
            <person name="Baker K."/>
            <person name="Baldwin D.T."/>
            <person name="Brush J."/>
            <person name="Chen J."/>
            <person name="Chow B."/>
            <person name="Chui C."/>
            <person name="Crowley C."/>
            <person name="Currell B."/>
            <person name="Deuel B."/>
            <person name="Dowd P."/>
            <person name="Eaton D."/>
            <person name="Foster J.S."/>
            <person name="Grimaldi C."/>
            <person name="Gu Q."/>
            <person name="Hass P.E."/>
            <person name="Heldens S."/>
            <person name="Huang A."/>
            <person name="Kim H.S."/>
            <person name="Klimowski L."/>
            <person name="Jin Y."/>
            <person name="Johnson S."/>
            <person name="Lee J."/>
            <person name="Lewis L."/>
            <person name="Liao D."/>
            <person name="Mark M.R."/>
            <person name="Robbie E."/>
            <person name="Sanchez C."/>
            <person name="Schoenfeld J."/>
            <person name="Seshagiri S."/>
            <person name="Simmons L."/>
            <person name="Singh J."/>
            <person name="Smith V."/>
            <person name="Stinson J."/>
            <person name="Vagts A."/>
            <person name="Vandlen R.L."/>
            <person name="Watanabe C."/>
            <person name="Wieand D."/>
            <person name="Woods K."/>
            <person name="Xie M.-H."/>
            <person name="Yansura D.G."/>
            <person name="Yi S."/>
            <person name="Yu G."/>
            <person name="Yuan J."/>
            <person name="Zhang M."/>
            <person name="Zhang Z."/>
            <person name="Goddard A.D."/>
            <person name="Wood W.I."/>
            <person name="Godowski P.J."/>
            <person name="Gray A.M."/>
        </authorList>
    </citation>
    <scope>NUCLEOTIDE SEQUENCE [LARGE SCALE MRNA] (ISOFORM 1)</scope>
</reference>
<reference key="6">
    <citation type="journal article" date="2005" name="DNA Res.">
        <title>Signal sequence and keyword trap in silico for selection of full-length human cDNAs encoding secretion or membrane proteins from oligo-capped cDNA libraries.</title>
        <authorList>
            <person name="Otsuki T."/>
            <person name="Ota T."/>
            <person name="Nishikawa T."/>
            <person name="Hayashi K."/>
            <person name="Suzuki Y."/>
            <person name="Yamamoto J."/>
            <person name="Wakamatsu A."/>
            <person name="Kimura K."/>
            <person name="Sakamoto K."/>
            <person name="Hatano N."/>
            <person name="Kawai Y."/>
            <person name="Ishii S."/>
            <person name="Saito K."/>
            <person name="Kojima S."/>
            <person name="Sugiyama T."/>
            <person name="Ono T."/>
            <person name="Okano K."/>
            <person name="Yoshikawa Y."/>
            <person name="Aotsuka S."/>
            <person name="Sasaki N."/>
            <person name="Hattori A."/>
            <person name="Okumura K."/>
            <person name="Nagai K."/>
            <person name="Sugano S."/>
            <person name="Isogai T."/>
        </authorList>
    </citation>
    <scope>NUCLEOTIDE SEQUENCE [LARGE SCALE MRNA] (ISOFORM 1)</scope>
</reference>
<reference key="7">
    <citation type="journal article" date="2004" name="Nat. Genet.">
        <title>Complete sequencing and characterization of 21,243 full-length human cDNAs.</title>
        <authorList>
            <person name="Ota T."/>
            <person name="Suzuki Y."/>
            <person name="Nishikawa T."/>
            <person name="Otsuki T."/>
            <person name="Sugiyama T."/>
            <person name="Irie R."/>
            <person name="Wakamatsu A."/>
            <person name="Hayashi K."/>
            <person name="Sato H."/>
            <person name="Nagai K."/>
            <person name="Kimura K."/>
            <person name="Makita H."/>
            <person name="Sekine M."/>
            <person name="Obayashi M."/>
            <person name="Nishi T."/>
            <person name="Shibahara T."/>
            <person name="Tanaka T."/>
            <person name="Ishii S."/>
            <person name="Yamamoto J."/>
            <person name="Saito K."/>
            <person name="Kawai Y."/>
            <person name="Isono Y."/>
            <person name="Nakamura Y."/>
            <person name="Nagahari K."/>
            <person name="Murakami K."/>
            <person name="Yasuda T."/>
            <person name="Iwayanagi T."/>
            <person name="Wagatsuma M."/>
            <person name="Shiratori A."/>
            <person name="Sudo H."/>
            <person name="Hosoiri T."/>
            <person name="Kaku Y."/>
            <person name="Kodaira H."/>
            <person name="Kondo H."/>
            <person name="Sugawara M."/>
            <person name="Takahashi M."/>
            <person name="Kanda K."/>
            <person name="Yokoi T."/>
            <person name="Furuya T."/>
            <person name="Kikkawa E."/>
            <person name="Omura Y."/>
            <person name="Abe K."/>
            <person name="Kamihara K."/>
            <person name="Katsuta N."/>
            <person name="Sato K."/>
            <person name="Tanikawa M."/>
            <person name="Yamazaki M."/>
            <person name="Ninomiya K."/>
            <person name="Ishibashi T."/>
            <person name="Yamashita H."/>
            <person name="Murakawa K."/>
            <person name="Fujimori K."/>
            <person name="Tanai H."/>
            <person name="Kimata M."/>
            <person name="Watanabe M."/>
            <person name="Hiraoka S."/>
            <person name="Chiba Y."/>
            <person name="Ishida S."/>
            <person name="Ono Y."/>
            <person name="Takiguchi S."/>
            <person name="Watanabe S."/>
            <person name="Yosida M."/>
            <person name="Hotuta T."/>
            <person name="Kusano J."/>
            <person name="Kanehori K."/>
            <person name="Takahashi-Fujii A."/>
            <person name="Hara H."/>
            <person name="Tanase T.-O."/>
            <person name="Nomura Y."/>
            <person name="Togiya S."/>
            <person name="Komai F."/>
            <person name="Hara R."/>
            <person name="Takeuchi K."/>
            <person name="Arita M."/>
            <person name="Imose N."/>
            <person name="Musashino K."/>
            <person name="Yuuki H."/>
            <person name="Oshima A."/>
            <person name="Sasaki N."/>
            <person name="Aotsuka S."/>
            <person name="Yoshikawa Y."/>
            <person name="Matsunawa H."/>
            <person name="Ichihara T."/>
            <person name="Shiohata N."/>
            <person name="Sano S."/>
            <person name="Moriya S."/>
            <person name="Momiyama H."/>
            <person name="Satoh N."/>
            <person name="Takami S."/>
            <person name="Terashima Y."/>
            <person name="Suzuki O."/>
            <person name="Nakagawa S."/>
            <person name="Senoh A."/>
            <person name="Mizoguchi H."/>
            <person name="Goto Y."/>
            <person name="Shimizu F."/>
            <person name="Wakebe H."/>
            <person name="Hishigaki H."/>
            <person name="Watanabe T."/>
            <person name="Sugiyama A."/>
            <person name="Takemoto M."/>
            <person name="Kawakami B."/>
            <person name="Yamazaki M."/>
            <person name="Watanabe K."/>
            <person name="Kumagai A."/>
            <person name="Itakura S."/>
            <person name="Fukuzumi Y."/>
            <person name="Fujimori Y."/>
            <person name="Komiyama M."/>
            <person name="Tashiro H."/>
            <person name="Tanigami A."/>
            <person name="Fujiwara T."/>
            <person name="Ono T."/>
            <person name="Yamada K."/>
            <person name="Fujii Y."/>
            <person name="Ozaki K."/>
            <person name="Hirao M."/>
            <person name="Ohmori Y."/>
            <person name="Kawabata A."/>
            <person name="Hikiji T."/>
            <person name="Kobatake N."/>
            <person name="Inagaki H."/>
            <person name="Ikema Y."/>
            <person name="Okamoto S."/>
            <person name="Okitani R."/>
            <person name="Kawakami T."/>
            <person name="Noguchi S."/>
            <person name="Itoh T."/>
            <person name="Shigeta K."/>
            <person name="Senba T."/>
            <person name="Matsumura K."/>
            <person name="Nakajima Y."/>
            <person name="Mizuno T."/>
            <person name="Morinaga M."/>
            <person name="Sasaki M."/>
            <person name="Togashi T."/>
            <person name="Oyama M."/>
            <person name="Hata H."/>
            <person name="Watanabe M."/>
            <person name="Komatsu T."/>
            <person name="Mizushima-Sugano J."/>
            <person name="Satoh T."/>
            <person name="Shirai Y."/>
            <person name="Takahashi Y."/>
            <person name="Nakagawa K."/>
            <person name="Okumura K."/>
            <person name="Nagase T."/>
            <person name="Nomura N."/>
            <person name="Kikuchi H."/>
            <person name="Masuho Y."/>
            <person name="Yamashita R."/>
            <person name="Nakai K."/>
            <person name="Yada T."/>
            <person name="Nakamura Y."/>
            <person name="Ohara O."/>
            <person name="Isogai T."/>
            <person name="Sugano S."/>
        </authorList>
    </citation>
    <scope>NUCLEOTIDE SEQUENCE [LARGE SCALE MRNA] (ISOFORM 2)</scope>
    <source>
        <tissue>Amygdala</tissue>
    </source>
</reference>
<reference key="8">
    <citation type="submission" date="2005-04" db="EMBL/GenBank/DDBJ databases">
        <authorList>
            <person name="Suzuki Y."/>
            <person name="Sugano S."/>
            <person name="Totoki Y."/>
            <person name="Toyoda A."/>
            <person name="Takeda T."/>
            <person name="Sakaki Y."/>
            <person name="Tanaka A."/>
            <person name="Yokoyama S."/>
        </authorList>
    </citation>
    <scope>NUCLEOTIDE SEQUENCE [LARGE SCALE MRNA] (ISOFORM 1)</scope>
    <source>
        <tissue>Cerebellum</tissue>
    </source>
</reference>
<reference key="9">
    <citation type="journal article" date="2006" name="Nature">
        <title>DNA sequence and analysis of human chromosome 8.</title>
        <authorList>
            <person name="Nusbaum C."/>
            <person name="Mikkelsen T.S."/>
            <person name="Zody M.C."/>
            <person name="Asakawa S."/>
            <person name="Taudien S."/>
            <person name="Garber M."/>
            <person name="Kodira C.D."/>
            <person name="Schueler M.G."/>
            <person name="Shimizu A."/>
            <person name="Whittaker C.A."/>
            <person name="Chang J.L."/>
            <person name="Cuomo C.A."/>
            <person name="Dewar K."/>
            <person name="FitzGerald M.G."/>
            <person name="Yang X."/>
            <person name="Allen N.R."/>
            <person name="Anderson S."/>
            <person name="Asakawa T."/>
            <person name="Blechschmidt K."/>
            <person name="Bloom T."/>
            <person name="Borowsky M.L."/>
            <person name="Butler J."/>
            <person name="Cook A."/>
            <person name="Corum B."/>
            <person name="DeArellano K."/>
            <person name="DeCaprio D."/>
            <person name="Dooley K.T."/>
            <person name="Dorris L. III"/>
            <person name="Engels R."/>
            <person name="Gloeckner G."/>
            <person name="Hafez N."/>
            <person name="Hagopian D.S."/>
            <person name="Hall J.L."/>
            <person name="Ishikawa S.K."/>
            <person name="Jaffe D.B."/>
            <person name="Kamat A."/>
            <person name="Kudoh J."/>
            <person name="Lehmann R."/>
            <person name="Lokitsang T."/>
            <person name="Macdonald P."/>
            <person name="Major J.E."/>
            <person name="Matthews C.D."/>
            <person name="Mauceli E."/>
            <person name="Menzel U."/>
            <person name="Mihalev A.H."/>
            <person name="Minoshima S."/>
            <person name="Murayama Y."/>
            <person name="Naylor J.W."/>
            <person name="Nicol R."/>
            <person name="Nguyen C."/>
            <person name="O'Leary S.B."/>
            <person name="O'Neill K."/>
            <person name="Parker S.C.J."/>
            <person name="Polley A."/>
            <person name="Raymond C.K."/>
            <person name="Reichwald K."/>
            <person name="Rodriguez J."/>
            <person name="Sasaki T."/>
            <person name="Schilhabel M."/>
            <person name="Siddiqui R."/>
            <person name="Smith C.L."/>
            <person name="Sneddon T.P."/>
            <person name="Talamas J.A."/>
            <person name="Tenzin P."/>
            <person name="Topham K."/>
            <person name="Venkataraman V."/>
            <person name="Wen G."/>
            <person name="Yamazaki S."/>
            <person name="Young S.K."/>
            <person name="Zeng Q."/>
            <person name="Zimmer A.R."/>
            <person name="Rosenthal A."/>
            <person name="Birren B.W."/>
            <person name="Platzer M."/>
            <person name="Shimizu N."/>
            <person name="Lander E.S."/>
        </authorList>
    </citation>
    <scope>NUCLEOTIDE SEQUENCE [LARGE SCALE GENOMIC DNA]</scope>
</reference>
<reference key="10">
    <citation type="submission" date="2005-09" db="EMBL/GenBank/DDBJ databases">
        <authorList>
            <person name="Mural R.J."/>
            <person name="Istrail S."/>
            <person name="Sutton G.G."/>
            <person name="Florea L."/>
            <person name="Halpern A.L."/>
            <person name="Mobarry C.M."/>
            <person name="Lippert R."/>
            <person name="Walenz B."/>
            <person name="Shatkay H."/>
            <person name="Dew I."/>
            <person name="Miller J.R."/>
            <person name="Flanigan M.J."/>
            <person name="Edwards N.J."/>
            <person name="Bolanos R."/>
            <person name="Fasulo D."/>
            <person name="Halldorsson B.V."/>
            <person name="Hannenhalli S."/>
            <person name="Turner R."/>
            <person name="Yooseph S."/>
            <person name="Lu F."/>
            <person name="Nusskern D.R."/>
            <person name="Shue B.C."/>
            <person name="Zheng X.H."/>
            <person name="Zhong F."/>
            <person name="Delcher A.L."/>
            <person name="Huson D.H."/>
            <person name="Kravitz S.A."/>
            <person name="Mouchard L."/>
            <person name="Reinert K."/>
            <person name="Remington K.A."/>
            <person name="Clark A.G."/>
            <person name="Waterman M.S."/>
            <person name="Eichler E.E."/>
            <person name="Adams M.D."/>
            <person name="Hunkapiller M.W."/>
            <person name="Myers E.W."/>
            <person name="Venter J.C."/>
        </authorList>
    </citation>
    <scope>NUCLEOTIDE SEQUENCE [LARGE SCALE GENOMIC DNA]</scope>
</reference>
<reference key="11">
    <citation type="journal article" date="2004" name="Genome Res.">
        <title>The status, quality, and expansion of the NIH full-length cDNA project: the Mammalian Gene Collection (MGC).</title>
        <authorList>
            <consortium name="The MGC Project Team"/>
        </authorList>
    </citation>
    <scope>NUCLEOTIDE SEQUENCE [LARGE SCALE MRNA] (ISOFORM 1)</scope>
    <source>
        <tissue>Uterus</tissue>
    </source>
</reference>
<reference key="12">
    <citation type="submission" date="1999-07" db="EMBL/GenBank/DDBJ databases">
        <title>Human NPD003 mRNA, complete cds.</title>
        <authorList>
            <person name="Huang Q.-H."/>
            <person name="Zhou J."/>
            <person name="Song H."/>
            <person name="Peng J."/>
            <person name="Zhang Q.-H."/>
            <person name="Fu G."/>
            <person name="Dai M."/>
            <person name="Mao Y."/>
            <person name="Mao M."/>
            <person name="Chen Z."/>
            <person name="Chen J."/>
        </authorList>
    </citation>
    <scope>NUCLEOTIDE SEQUENCE [LARGE SCALE MRNA] OF 3-339 (ISOFORM 1)</scope>
    <source>
        <tissue>Pituitary</tissue>
    </source>
</reference>
<reference key="13">
    <citation type="journal article" date="2004" name="Protein Sci.">
        <title>Signal peptide prediction based on analysis of experimentally verified cleavage sites.</title>
        <authorList>
            <person name="Zhang Z."/>
            <person name="Henzel W.J."/>
        </authorList>
    </citation>
    <scope>PROTEIN SEQUENCE OF 31-45</scope>
</reference>
<reference key="14">
    <citation type="journal article" date="2018" name="Cell. Physiol. Biochem.">
        <title>EFHB is a Novel Cytosolic Ca2+ Sensor That Modulates STIM1-SARAF Interaction.</title>
        <authorList>
            <person name="Albarran L."/>
            <person name="Lopez J.J."/>
            <person name="Jardin I."/>
            <person name="Sanchez-Collado J."/>
            <person name="Berna-Erro A."/>
            <person name="Smani T."/>
            <person name="Camello P.J."/>
            <person name="Salido G.M."/>
            <person name="Rosado J.A."/>
        </authorList>
    </citation>
    <scope>INTERACTION WITH STIM1</scope>
</reference>
<organism>
    <name type="scientific">Homo sapiens</name>
    <name type="common">Human</name>
    <dbReference type="NCBI Taxonomy" id="9606"/>
    <lineage>
        <taxon>Eukaryota</taxon>
        <taxon>Metazoa</taxon>
        <taxon>Chordata</taxon>
        <taxon>Craniata</taxon>
        <taxon>Vertebrata</taxon>
        <taxon>Euteleostomi</taxon>
        <taxon>Mammalia</taxon>
        <taxon>Eutheria</taxon>
        <taxon>Euarchontoglires</taxon>
        <taxon>Primates</taxon>
        <taxon>Haplorrhini</taxon>
        <taxon>Catarrhini</taxon>
        <taxon>Hominidae</taxon>
        <taxon>Homo</taxon>
    </lineage>
</organism>
<feature type="signal peptide" evidence="3">
    <location>
        <begin position="1"/>
        <end position="30"/>
    </location>
</feature>
<feature type="chain" id="PRO_0000045485" description="Store-operated calcium entry-associated regulatory factor">
    <location>
        <begin position="31"/>
        <end position="339"/>
    </location>
</feature>
<feature type="topological domain" description="Lumenal" evidence="1">
    <location>
        <begin position="31"/>
        <end position="173"/>
    </location>
</feature>
<feature type="transmembrane region" description="Helical" evidence="1">
    <location>
        <begin position="174"/>
        <end position="194"/>
    </location>
</feature>
<feature type="topological domain" description="Cytoplasmic" evidence="1">
    <location>
        <begin position="195"/>
        <end position="339"/>
    </location>
</feature>
<feature type="region of interest" description="Disordered" evidence="2">
    <location>
        <begin position="318"/>
        <end position="339"/>
    </location>
</feature>
<feature type="compositionally biased region" description="Polar residues" evidence="2">
    <location>
        <begin position="318"/>
        <end position="330"/>
    </location>
</feature>
<feature type="splice variant" id="VSP_043773" description="In isoform 2." evidence="7 8">
    <location>
        <begin position="1"/>
        <end position="172"/>
    </location>
</feature>
<feature type="sequence variant" id="VAR_054042" description="In dbSNP:rs11538828.">
    <original>P</original>
    <variation>T</variation>
    <location>
        <position position="78"/>
    </location>
</feature>
<feature type="mutagenesis site" description="Dominant-negative mutant; leading to impair inhibition of SOCE." evidence="4">
    <original>E</original>
    <variation>A</variation>
    <location>
        <position position="148"/>
    </location>
</feature>
<feature type="sequence conflict" description="In Ref. 3; AAO85460 and 4; AAD43012." evidence="9" ref="3 4">
    <original>RL</original>
    <variation>SW</variation>
    <location>
        <begin position="57"/>
        <end position="58"/>
    </location>
</feature>
<feature type="sequence conflict" description="In Ref. 12; AAD44487." evidence="9" ref="12">
    <original>R</original>
    <variation>K</variation>
    <location>
        <position position="57"/>
    </location>
</feature>
<feature type="sequence conflict" description="In Ref. 6; BAG52116." evidence="9" ref="6">
    <original>K</original>
    <variation>E</variation>
    <location>
        <position position="145"/>
    </location>
</feature>
<feature type="sequence conflict" description="In Ref. 8; BAD96352." evidence="9" ref="8">
    <original>E</original>
    <variation>G</variation>
    <location>
        <position position="231"/>
    </location>
</feature>
<feature type="sequence conflict" description="In Ref. 8; BAD96352." evidence="9" ref="8">
    <original>L</original>
    <variation>S</variation>
    <location>
        <position position="267"/>
    </location>
</feature>
<feature type="strand" evidence="11">
    <location>
        <begin position="36"/>
        <end position="38"/>
    </location>
</feature>
<feature type="helix" evidence="11">
    <location>
        <begin position="39"/>
        <end position="41"/>
    </location>
</feature>
<feature type="strand" evidence="11">
    <location>
        <begin position="44"/>
        <end position="48"/>
    </location>
</feature>
<feature type="strand" evidence="11">
    <location>
        <begin position="56"/>
        <end position="58"/>
    </location>
</feature>
<feature type="strand" evidence="11">
    <location>
        <begin position="62"/>
        <end position="68"/>
    </location>
</feature>
<feature type="strand" evidence="10">
    <location>
        <begin position="73"/>
        <end position="75"/>
    </location>
</feature>
<feature type="strand" evidence="11">
    <location>
        <begin position="79"/>
        <end position="85"/>
    </location>
</feature>
<feature type="turn" evidence="11">
    <location>
        <begin position="86"/>
        <end position="90"/>
    </location>
</feature>
<feature type="strand" evidence="11">
    <location>
        <begin position="95"/>
        <end position="102"/>
    </location>
</feature>
<feature type="strand" evidence="11">
    <location>
        <begin position="105"/>
        <end position="113"/>
    </location>
</feature>
<feature type="strand" evidence="11">
    <location>
        <begin position="115"/>
        <end position="119"/>
    </location>
</feature>
<feature type="strand" evidence="11">
    <location>
        <begin position="123"/>
        <end position="126"/>
    </location>
</feature>
<feature type="strand" evidence="11">
    <location>
        <begin position="131"/>
        <end position="138"/>
    </location>
</feature>
<feature type="helix" evidence="11">
    <location>
        <begin position="142"/>
        <end position="145"/>
    </location>
</feature>
<feature type="strand" evidence="11">
    <location>
        <begin position="152"/>
        <end position="158"/>
    </location>
</feature>
<name>SARAF_HUMAN</name>
<proteinExistence type="evidence at protein level"/>
<keyword id="KW-0002">3D-structure</keyword>
<keyword id="KW-0025">Alternative splicing</keyword>
<keyword id="KW-0106">Calcium</keyword>
<keyword id="KW-0109">Calcium transport</keyword>
<keyword id="KW-0903">Direct protein sequencing</keyword>
<keyword id="KW-0256">Endoplasmic reticulum</keyword>
<keyword id="KW-0406">Ion transport</keyword>
<keyword id="KW-0472">Membrane</keyword>
<keyword id="KW-1267">Proteomics identification</keyword>
<keyword id="KW-1185">Reference proteome</keyword>
<keyword id="KW-0732">Signal</keyword>
<keyword id="KW-0812">Transmembrane</keyword>
<keyword id="KW-1133">Transmembrane helix</keyword>
<keyword id="KW-0813">Transport</keyword>
<sequence>MAAACGPGAAGYCLLLGLHLFLLTAGPALGWNDPDRMLLRDVKALTLHYDRYTTSRRLDPIPQLKCVGGTAGCDSYTPKVIQCQNKGWDGYDVQWECKTDLDIAYKFGKTVVSCEGYESSEDQYVLRGSCGLEYNLDYTELGLQKLKESGKQHGFASFSDYYYKWSSADSCNMSGLITIVVLLGIAFVVYKLFLSDGQYSPPPYSEYPPFSHRYQRFTNSAGPPPPGFKSEFTGPQNTGHGATSGFGSAFTGQQGYENSGPGFWTGLGTGGILGYLFGSNRAATPFSDSWYYPSYPPSYPGTWNRAYSPLHGGSGSYSVCSNSDTKTRTASGYGGTRRR</sequence>